<evidence type="ECO:0000250" key="1">
    <source>
        <dbReference type="UniProtKB" id="L0E2Z4"/>
    </source>
</evidence>
<evidence type="ECO:0000250" key="2">
    <source>
        <dbReference type="UniProtKB" id="O93868"/>
    </source>
</evidence>
<evidence type="ECO:0000250" key="3">
    <source>
        <dbReference type="UniProtKB" id="P38286"/>
    </source>
</evidence>
<evidence type="ECO:0000255" key="4">
    <source>
        <dbReference type="HAMAP-Rule" id="MF_03107"/>
    </source>
</evidence>
<accession>Q0CY11</accession>
<sequence>MDFLNKHSSCISKLFSCPSQWQLNAAPGWQAIAAWALIAAGGFFVISRALLFGRVLLSLFVLPGKSLRSFGPKGSWAVVTGASDGLGKEFALQLARAGYNIVLVSRTASKLDTLSDELTSKYPSVQTKVLAMDFARNQDSDYQKLKELIGDLDVAVLINNVGKSHDMPVPFALTSEEEMTDIVTINCMGTLRVTQLVVPGMMQRRRGLILTMGSFGGLLPTPLLATYSGSKAFLQQWSTSLGSELAPYGITVELVQAYLITSAMSKVRRTSALIPNPRAFVKSVLSKIGRNGGSPGYAYSSSPYWSHGLMAWFLTCVTGTMGKLVVGQNRSMHESIRKRALRKAEREKGKKST</sequence>
<keyword id="KW-0256">Endoplasmic reticulum</keyword>
<keyword id="KW-0275">Fatty acid biosynthesis</keyword>
<keyword id="KW-0276">Fatty acid metabolism</keyword>
<keyword id="KW-0444">Lipid biosynthesis</keyword>
<keyword id="KW-0443">Lipid metabolism</keyword>
<keyword id="KW-0472">Membrane</keyword>
<keyword id="KW-0521">NADP</keyword>
<keyword id="KW-0560">Oxidoreductase</keyword>
<keyword id="KW-1185">Reference proteome</keyword>
<keyword id="KW-0812">Transmembrane</keyword>
<keyword id="KW-1133">Transmembrane helix</keyword>
<organism>
    <name type="scientific">Aspergillus terreus (strain NIH 2624 / FGSC A1156)</name>
    <dbReference type="NCBI Taxonomy" id="341663"/>
    <lineage>
        <taxon>Eukaryota</taxon>
        <taxon>Fungi</taxon>
        <taxon>Dikarya</taxon>
        <taxon>Ascomycota</taxon>
        <taxon>Pezizomycotina</taxon>
        <taxon>Eurotiomycetes</taxon>
        <taxon>Eurotiomycetidae</taxon>
        <taxon>Eurotiales</taxon>
        <taxon>Aspergillaceae</taxon>
        <taxon>Aspergillus</taxon>
        <taxon>Aspergillus subgen. Circumdati</taxon>
    </lineage>
</organism>
<comment type="function">
    <text evidence="4">Component of the microsomal membrane bound fatty acid elongation system, which produces the 26-carbon very long-chain fatty acids (VLCFA) from palmitate. Catalyzes the reduction of the 3-ketoacyl-CoA intermediate that is formed in each cycle of fatty acid elongation. VLCFAs serve as precursors for ceramide and sphingolipids.</text>
</comment>
<comment type="catalytic activity">
    <reaction evidence="4">
        <text>a very-long-chain (3R)-3-hydroxyacyl-CoA + NADP(+) = a very-long-chain 3-oxoacyl-CoA + NADPH + H(+)</text>
        <dbReference type="Rhea" id="RHEA:48680"/>
        <dbReference type="ChEBI" id="CHEBI:15378"/>
        <dbReference type="ChEBI" id="CHEBI:57783"/>
        <dbReference type="ChEBI" id="CHEBI:58349"/>
        <dbReference type="ChEBI" id="CHEBI:85440"/>
        <dbReference type="ChEBI" id="CHEBI:90725"/>
        <dbReference type="EC" id="1.1.1.330"/>
    </reaction>
</comment>
<comment type="pathway">
    <text evidence="3">Lipid metabolism; fatty acid biosynthesis.</text>
</comment>
<comment type="subcellular location">
    <subcellularLocation>
        <location evidence="4">Endoplasmic reticulum membrane</location>
        <topology evidence="4">Single-pass membrane protein</topology>
    </subcellularLocation>
</comment>
<comment type="similarity">
    <text evidence="4">Belongs to the short-chain dehydrogenases/reductases (SDR) family.</text>
</comment>
<dbReference type="EC" id="1.1.1.330" evidence="4"/>
<dbReference type="EMBL" id="CH476595">
    <property type="protein sequence ID" value="EAU38180.1"/>
    <property type="molecule type" value="Genomic_DNA"/>
</dbReference>
<dbReference type="RefSeq" id="XP_001208788.1">
    <property type="nucleotide sequence ID" value="XM_001208788.1"/>
</dbReference>
<dbReference type="SMR" id="Q0CY11"/>
<dbReference type="STRING" id="341663.Q0CY11"/>
<dbReference type="EnsemblFungi" id="EAU38180">
    <property type="protein sequence ID" value="EAU38180"/>
    <property type="gene ID" value="ATEG_01423"/>
</dbReference>
<dbReference type="GeneID" id="4316179"/>
<dbReference type="VEuPathDB" id="FungiDB:ATEG_01423"/>
<dbReference type="eggNOG" id="KOG1014">
    <property type="taxonomic scope" value="Eukaryota"/>
</dbReference>
<dbReference type="HOGENOM" id="CLU_010194_38_0_1"/>
<dbReference type="OMA" id="LVAPGMM"/>
<dbReference type="OrthoDB" id="5545019at2759"/>
<dbReference type="UniPathway" id="UPA00094"/>
<dbReference type="Proteomes" id="UP000007963">
    <property type="component" value="Unassembled WGS sequence"/>
</dbReference>
<dbReference type="GO" id="GO:0005789">
    <property type="term" value="C:endoplasmic reticulum membrane"/>
    <property type="evidence" value="ECO:0007669"/>
    <property type="project" value="UniProtKB-SubCell"/>
</dbReference>
<dbReference type="GO" id="GO:0045703">
    <property type="term" value="F:ketoreductase activity"/>
    <property type="evidence" value="ECO:0007669"/>
    <property type="project" value="UniProtKB-UniRule"/>
</dbReference>
<dbReference type="GO" id="GO:0141040">
    <property type="term" value="F:very-long-chain 3-oxoacyl-CoA reductase activity"/>
    <property type="evidence" value="ECO:0007669"/>
    <property type="project" value="UniProtKB-EC"/>
</dbReference>
<dbReference type="GO" id="GO:0030497">
    <property type="term" value="P:fatty acid elongation"/>
    <property type="evidence" value="ECO:0007669"/>
    <property type="project" value="UniProtKB-UniRule"/>
</dbReference>
<dbReference type="GO" id="GO:0044550">
    <property type="term" value="P:secondary metabolite biosynthetic process"/>
    <property type="evidence" value="ECO:0007669"/>
    <property type="project" value="UniProtKB-ARBA"/>
</dbReference>
<dbReference type="GO" id="GO:0030148">
    <property type="term" value="P:sphingolipid biosynthetic process"/>
    <property type="evidence" value="ECO:0007669"/>
    <property type="project" value="EnsemblFungi"/>
</dbReference>
<dbReference type="GO" id="GO:0042761">
    <property type="term" value="P:very long-chain fatty acid biosynthetic process"/>
    <property type="evidence" value="ECO:0007669"/>
    <property type="project" value="EnsemblFungi"/>
</dbReference>
<dbReference type="CDD" id="cd05356">
    <property type="entry name" value="17beta-HSD1_like_SDR_c"/>
    <property type="match status" value="1"/>
</dbReference>
<dbReference type="FunFam" id="3.40.50.720:FF:000317">
    <property type="entry name" value="Very-long-chain 3-oxoacyl-CoA reductase"/>
    <property type="match status" value="1"/>
</dbReference>
<dbReference type="Gene3D" id="3.40.50.720">
    <property type="entry name" value="NAD(P)-binding Rossmann-like Domain"/>
    <property type="match status" value="1"/>
</dbReference>
<dbReference type="HAMAP" id="MF_03107">
    <property type="entry name" value="3_ketoreductase"/>
    <property type="match status" value="1"/>
</dbReference>
<dbReference type="InterPro" id="IPR027533">
    <property type="entry name" value="3_ketoreductase_fungal"/>
</dbReference>
<dbReference type="InterPro" id="IPR036291">
    <property type="entry name" value="NAD(P)-bd_dom_sf"/>
</dbReference>
<dbReference type="InterPro" id="IPR020904">
    <property type="entry name" value="Sc_DH/Rdtase_CS"/>
</dbReference>
<dbReference type="InterPro" id="IPR002347">
    <property type="entry name" value="SDR_fam"/>
</dbReference>
<dbReference type="PANTHER" id="PTHR43086:SF2">
    <property type="entry name" value="HYDROXYSTEROID DEHYDROGENASE-LIKE PROTEIN 1"/>
    <property type="match status" value="1"/>
</dbReference>
<dbReference type="PANTHER" id="PTHR43086">
    <property type="entry name" value="VERY-LONG-CHAIN 3-OXOOACYL-COA REDUCTASE"/>
    <property type="match status" value="1"/>
</dbReference>
<dbReference type="Pfam" id="PF00106">
    <property type="entry name" value="adh_short"/>
    <property type="match status" value="1"/>
</dbReference>
<dbReference type="PIRSF" id="PIRSF000126">
    <property type="entry name" value="11-beta-HSD1"/>
    <property type="match status" value="1"/>
</dbReference>
<dbReference type="PRINTS" id="PR00081">
    <property type="entry name" value="GDHRDH"/>
</dbReference>
<dbReference type="SUPFAM" id="SSF51735">
    <property type="entry name" value="NAD(P)-binding Rossmann-fold domains"/>
    <property type="match status" value="1"/>
</dbReference>
<dbReference type="PROSITE" id="PS00061">
    <property type="entry name" value="ADH_SHORT"/>
    <property type="match status" value="1"/>
</dbReference>
<reference key="1">
    <citation type="submission" date="2005-09" db="EMBL/GenBank/DDBJ databases">
        <title>Annotation of the Aspergillus terreus NIH2624 genome.</title>
        <authorList>
            <person name="Birren B.W."/>
            <person name="Lander E.S."/>
            <person name="Galagan J.E."/>
            <person name="Nusbaum C."/>
            <person name="Devon K."/>
            <person name="Henn M."/>
            <person name="Ma L.-J."/>
            <person name="Jaffe D.B."/>
            <person name="Butler J."/>
            <person name="Alvarez P."/>
            <person name="Gnerre S."/>
            <person name="Grabherr M."/>
            <person name="Kleber M."/>
            <person name="Mauceli E.W."/>
            <person name="Brockman W."/>
            <person name="Rounsley S."/>
            <person name="Young S.K."/>
            <person name="LaButti K."/>
            <person name="Pushparaj V."/>
            <person name="DeCaprio D."/>
            <person name="Crawford M."/>
            <person name="Koehrsen M."/>
            <person name="Engels R."/>
            <person name="Montgomery P."/>
            <person name="Pearson M."/>
            <person name="Howarth C."/>
            <person name="Larson L."/>
            <person name="Luoma S."/>
            <person name="White J."/>
            <person name="Alvarado L."/>
            <person name="Kodira C.D."/>
            <person name="Zeng Q."/>
            <person name="Oleary S."/>
            <person name="Yandava C."/>
            <person name="Denning D.W."/>
            <person name="Nierman W.C."/>
            <person name="Milne T."/>
            <person name="Madden K."/>
        </authorList>
    </citation>
    <scope>NUCLEOTIDE SEQUENCE [LARGE SCALE GENOMIC DNA]</scope>
    <source>
        <strain>NIH 2624 / FGSC A1156</strain>
    </source>
</reference>
<protein>
    <recommendedName>
        <fullName evidence="4">Very-long-chain 3-oxoacyl-CoA reductase</fullName>
        <ecNumber evidence="4">1.1.1.330</ecNumber>
    </recommendedName>
    <alternativeName>
        <fullName evidence="4">3-ketoacyl-CoA reductase</fullName>
        <shortName evidence="4">3-ketoreductase</shortName>
        <shortName evidence="4">KAR</shortName>
    </alternativeName>
    <alternativeName>
        <fullName evidence="4">Microsomal beta-keto-reductase</fullName>
    </alternativeName>
</protein>
<proteinExistence type="inferred from homology"/>
<feature type="chain" id="PRO_0000357300" description="Very-long-chain 3-oxoacyl-CoA reductase">
    <location>
        <begin position="1"/>
        <end position="353"/>
    </location>
</feature>
<feature type="transmembrane region" description="Helical" evidence="4">
    <location>
        <begin position="33"/>
        <end position="53"/>
    </location>
</feature>
<feature type="active site" description="Proton donor" evidence="2">
    <location>
        <position position="227"/>
    </location>
</feature>
<feature type="active site" description="Lowers pKa of active site Tyr" evidence="2">
    <location>
        <position position="231"/>
    </location>
</feature>
<feature type="binding site" evidence="1">
    <location>
        <position position="78"/>
    </location>
    <ligand>
        <name>NADP(+)</name>
        <dbReference type="ChEBI" id="CHEBI:58349"/>
    </ligand>
</feature>
<feature type="binding site" evidence="1">
    <location>
        <position position="133"/>
    </location>
    <ligand>
        <name>NADP(+)</name>
        <dbReference type="ChEBI" id="CHEBI:58349"/>
    </ligand>
</feature>
<feature type="binding site" evidence="1">
    <location>
        <position position="141"/>
    </location>
    <ligand>
        <name>NADP(+)</name>
        <dbReference type="ChEBI" id="CHEBI:58349"/>
    </ligand>
</feature>
<feature type="binding site" evidence="2">
    <location>
        <position position="160"/>
    </location>
    <ligand>
        <name>NADP(+)</name>
        <dbReference type="ChEBI" id="CHEBI:58349"/>
    </ligand>
</feature>
<feature type="binding site" evidence="2">
    <location>
        <position position="227"/>
    </location>
    <ligand>
        <name>NADP(+)</name>
        <dbReference type="ChEBI" id="CHEBI:58349"/>
    </ligand>
</feature>
<feature type="binding site" evidence="2">
    <location>
        <position position="231"/>
    </location>
    <ligand>
        <name>NADP(+)</name>
        <dbReference type="ChEBI" id="CHEBI:58349"/>
    </ligand>
</feature>
<feature type="binding site" evidence="2">
    <location>
        <position position="260"/>
    </location>
    <ligand>
        <name>NADP(+)</name>
        <dbReference type="ChEBI" id="CHEBI:58349"/>
    </ligand>
</feature>
<feature type="binding site" evidence="1">
    <location>
        <position position="262"/>
    </location>
    <ligand>
        <name>NADP(+)</name>
        <dbReference type="ChEBI" id="CHEBI:58349"/>
    </ligand>
</feature>
<name>MKAR_ASPTN</name>
<gene>
    <name type="ORF">ATEG_01423</name>
</gene>